<protein>
    <recommendedName>
        <fullName evidence="1">Argininosuccinate lyase</fullName>
        <shortName evidence="1">ASAL</shortName>
        <ecNumber evidence="1">4.3.2.1</ecNumber>
    </recommendedName>
    <alternativeName>
        <fullName evidence="1">Arginosuccinase</fullName>
    </alternativeName>
</protein>
<name>ARLY_SINFN</name>
<proteinExistence type="inferred from homology"/>
<keyword id="KW-0028">Amino-acid biosynthesis</keyword>
<keyword id="KW-0055">Arginine biosynthesis</keyword>
<keyword id="KW-0963">Cytoplasm</keyword>
<keyword id="KW-0456">Lyase</keyword>
<keyword id="KW-1185">Reference proteome</keyword>
<organism>
    <name type="scientific">Sinorhizobium fredii (strain NBRC 101917 / NGR234)</name>
    <dbReference type="NCBI Taxonomy" id="394"/>
    <lineage>
        <taxon>Bacteria</taxon>
        <taxon>Pseudomonadati</taxon>
        <taxon>Pseudomonadota</taxon>
        <taxon>Alphaproteobacteria</taxon>
        <taxon>Hyphomicrobiales</taxon>
        <taxon>Rhizobiaceae</taxon>
        <taxon>Sinorhizobium/Ensifer group</taxon>
        <taxon>Sinorhizobium</taxon>
    </lineage>
</organism>
<comment type="catalytic activity">
    <reaction evidence="1">
        <text>2-(N(omega)-L-arginino)succinate = fumarate + L-arginine</text>
        <dbReference type="Rhea" id="RHEA:24020"/>
        <dbReference type="ChEBI" id="CHEBI:29806"/>
        <dbReference type="ChEBI" id="CHEBI:32682"/>
        <dbReference type="ChEBI" id="CHEBI:57472"/>
        <dbReference type="EC" id="4.3.2.1"/>
    </reaction>
</comment>
<comment type="pathway">
    <text evidence="1">Amino-acid biosynthesis; L-arginine biosynthesis; L-arginine from L-ornithine and carbamoyl phosphate: step 3/3.</text>
</comment>
<comment type="subcellular location">
    <subcellularLocation>
        <location evidence="1">Cytoplasm</location>
    </subcellularLocation>
</comment>
<comment type="similarity">
    <text evidence="1">Belongs to the lyase 1 family. Argininosuccinate lyase subfamily.</text>
</comment>
<accession>C3MHU1</accession>
<evidence type="ECO:0000255" key="1">
    <source>
        <dbReference type="HAMAP-Rule" id="MF_00006"/>
    </source>
</evidence>
<feature type="chain" id="PRO_1000116340" description="Argininosuccinate lyase">
    <location>
        <begin position="1"/>
        <end position="467"/>
    </location>
</feature>
<gene>
    <name evidence="1" type="primary">argH</name>
    <name type="ordered locus">NGR_c26940</name>
</gene>
<sequence length="467" mass="50835">MADGSSETKSSNQMWGGRFASGPDAIMEEINASIGFDKKLYAQDIRGSIAHATMLAHKGIISAEDKDKIVHGLETILSEIESGAFDFSRRLEDIHMNIEARLASLIGPAAGRLHTARSRNDQVALDFRLWVKEELQRTEKALTGLIGAFLDRAEEHAGTVMPGFTHLQTAQPVTFGHHCMAYVEMFGRDRSRVRHAIEHMDESPIGAAALAGTGFPIDRHMTAKALGFREPTRNSIDTVSDRDFALEFLSIASIAATHLSRLAEEIVIWSTPQFGFIRLSDAFSTGSSIMPQKKNPDAAELVRAKTGRINGSLIALLTVMKGLPLAYSKDMQEDKEQVFDAAESLELAIAAMTGMVRDMTVRADRMKAAAGSGYSTATDLADWLVREAGLPFRDAHHVTGRAVALAEQKGCDLADLSLADLQAINPAITDKVFDVLTVEASVASRTSFGGTAPAEVRKQIAWWRARN</sequence>
<dbReference type="EC" id="4.3.2.1" evidence="1"/>
<dbReference type="EMBL" id="CP001389">
    <property type="protein sequence ID" value="ACP26443.1"/>
    <property type="molecule type" value="Genomic_DNA"/>
</dbReference>
<dbReference type="RefSeq" id="WP_012709200.1">
    <property type="nucleotide sequence ID" value="NC_012587.1"/>
</dbReference>
<dbReference type="RefSeq" id="YP_002827196.1">
    <property type="nucleotide sequence ID" value="NC_012587.1"/>
</dbReference>
<dbReference type="SMR" id="C3MHU1"/>
<dbReference type="STRING" id="394.NGR_c26940"/>
<dbReference type="KEGG" id="rhi:NGR_c26940"/>
<dbReference type="PATRIC" id="fig|394.7.peg.5519"/>
<dbReference type="eggNOG" id="COG0165">
    <property type="taxonomic scope" value="Bacteria"/>
</dbReference>
<dbReference type="HOGENOM" id="CLU_027272_2_3_5"/>
<dbReference type="OrthoDB" id="9769623at2"/>
<dbReference type="UniPathway" id="UPA00068">
    <property type="reaction ID" value="UER00114"/>
</dbReference>
<dbReference type="Proteomes" id="UP000001054">
    <property type="component" value="Chromosome"/>
</dbReference>
<dbReference type="GO" id="GO:0005829">
    <property type="term" value="C:cytosol"/>
    <property type="evidence" value="ECO:0007669"/>
    <property type="project" value="TreeGrafter"/>
</dbReference>
<dbReference type="GO" id="GO:0004056">
    <property type="term" value="F:argininosuccinate lyase activity"/>
    <property type="evidence" value="ECO:0007669"/>
    <property type="project" value="UniProtKB-UniRule"/>
</dbReference>
<dbReference type="GO" id="GO:0042450">
    <property type="term" value="P:arginine biosynthetic process via ornithine"/>
    <property type="evidence" value="ECO:0007669"/>
    <property type="project" value="InterPro"/>
</dbReference>
<dbReference type="GO" id="GO:0006526">
    <property type="term" value="P:L-arginine biosynthetic process"/>
    <property type="evidence" value="ECO:0007669"/>
    <property type="project" value="UniProtKB-UniRule"/>
</dbReference>
<dbReference type="CDD" id="cd01359">
    <property type="entry name" value="Argininosuccinate_lyase"/>
    <property type="match status" value="1"/>
</dbReference>
<dbReference type="FunFam" id="1.10.275.10:FF:000002">
    <property type="entry name" value="Argininosuccinate lyase"/>
    <property type="match status" value="1"/>
</dbReference>
<dbReference type="FunFam" id="1.10.40.30:FF:000001">
    <property type="entry name" value="Argininosuccinate lyase"/>
    <property type="match status" value="1"/>
</dbReference>
<dbReference type="FunFam" id="1.20.200.10:FF:000015">
    <property type="entry name" value="argininosuccinate lyase isoform X2"/>
    <property type="match status" value="1"/>
</dbReference>
<dbReference type="Gene3D" id="1.10.40.30">
    <property type="entry name" value="Fumarase/aspartase (C-terminal domain)"/>
    <property type="match status" value="1"/>
</dbReference>
<dbReference type="Gene3D" id="1.20.200.10">
    <property type="entry name" value="Fumarase/aspartase (Central domain)"/>
    <property type="match status" value="1"/>
</dbReference>
<dbReference type="Gene3D" id="1.10.275.10">
    <property type="entry name" value="Fumarase/aspartase (N-terminal domain)"/>
    <property type="match status" value="1"/>
</dbReference>
<dbReference type="HAMAP" id="MF_00006">
    <property type="entry name" value="Arg_succ_lyase"/>
    <property type="match status" value="1"/>
</dbReference>
<dbReference type="InterPro" id="IPR029419">
    <property type="entry name" value="Arg_succ_lyase_C"/>
</dbReference>
<dbReference type="InterPro" id="IPR009049">
    <property type="entry name" value="Argininosuccinate_lyase"/>
</dbReference>
<dbReference type="InterPro" id="IPR024083">
    <property type="entry name" value="Fumarase/histidase_N"/>
</dbReference>
<dbReference type="InterPro" id="IPR020557">
    <property type="entry name" value="Fumarate_lyase_CS"/>
</dbReference>
<dbReference type="InterPro" id="IPR000362">
    <property type="entry name" value="Fumarate_lyase_fam"/>
</dbReference>
<dbReference type="InterPro" id="IPR022761">
    <property type="entry name" value="Fumarate_lyase_N"/>
</dbReference>
<dbReference type="InterPro" id="IPR008948">
    <property type="entry name" value="L-Aspartase-like"/>
</dbReference>
<dbReference type="NCBIfam" id="TIGR00838">
    <property type="entry name" value="argH"/>
    <property type="match status" value="1"/>
</dbReference>
<dbReference type="PANTHER" id="PTHR43814">
    <property type="entry name" value="ARGININOSUCCINATE LYASE"/>
    <property type="match status" value="1"/>
</dbReference>
<dbReference type="PANTHER" id="PTHR43814:SF1">
    <property type="entry name" value="ARGININOSUCCINATE LYASE"/>
    <property type="match status" value="1"/>
</dbReference>
<dbReference type="Pfam" id="PF14698">
    <property type="entry name" value="ASL_C2"/>
    <property type="match status" value="1"/>
</dbReference>
<dbReference type="Pfam" id="PF00206">
    <property type="entry name" value="Lyase_1"/>
    <property type="match status" value="1"/>
</dbReference>
<dbReference type="PRINTS" id="PR00145">
    <property type="entry name" value="ARGSUCLYASE"/>
</dbReference>
<dbReference type="PRINTS" id="PR00149">
    <property type="entry name" value="FUMRATELYASE"/>
</dbReference>
<dbReference type="SUPFAM" id="SSF48557">
    <property type="entry name" value="L-aspartase-like"/>
    <property type="match status" value="1"/>
</dbReference>
<dbReference type="PROSITE" id="PS00163">
    <property type="entry name" value="FUMARATE_LYASES"/>
    <property type="match status" value="1"/>
</dbReference>
<reference key="1">
    <citation type="journal article" date="2009" name="Appl. Environ. Microbiol.">
        <title>Rhizobium sp. strain NGR234 possesses a remarkable number of secretion systems.</title>
        <authorList>
            <person name="Schmeisser C."/>
            <person name="Liesegang H."/>
            <person name="Krysciak D."/>
            <person name="Bakkou N."/>
            <person name="Le Quere A."/>
            <person name="Wollherr A."/>
            <person name="Heinemeyer I."/>
            <person name="Morgenstern B."/>
            <person name="Pommerening-Roeser A."/>
            <person name="Flores M."/>
            <person name="Palacios R."/>
            <person name="Brenner S."/>
            <person name="Gottschalk G."/>
            <person name="Schmitz R.A."/>
            <person name="Broughton W.J."/>
            <person name="Perret X."/>
            <person name="Strittmatter A.W."/>
            <person name="Streit W.R."/>
        </authorList>
    </citation>
    <scope>NUCLEOTIDE SEQUENCE [LARGE SCALE GENOMIC DNA]</scope>
    <source>
        <strain>NBRC 101917 / NGR234</strain>
    </source>
</reference>